<sequence>SLVELGKMILQETGKNPVTSYGAYGCNCGVLGSGKPKDATDRCCYVHKCCYKKLTDCDPKKDRYSYSWKDKTIVCGENNSCLKELCECDKAVAICLRENLDTYNKKYNYLKPFCKKADPC</sequence>
<comment type="function">
    <text evidence="1 2">Snake venom phospholipase A2 homolog that lacks enzymatic activity (PubMed:29067765). Shows moderate cytotoxicity against C2C12 myotubes (activity above 200 ug/mL) (PubMed:29067765). Also shows antibacterial activity against both Gram-positive and Gram-negative bacteria (PubMed:29067765). A model of myotoxic mechanism has been proposed: an apo Lys49-PLA2 is activated by the entrance of a hydrophobic molecule (e.g. fatty acid) at the hydrophobic channel of the protein leading to a reorientation of a monomer (By similarity). This reorientation causes a transition between 'inactive' to 'active' states, causing alignment of C-terminal and membrane-docking sites (MDoS) side-by-side and putting the membrane-disruption sites (MDiS) in the same plane, exposed to solvent and in a symmetric position for both monomers (By similarity). The MDoS region stabilizes the toxin on membrane by the interaction of charged residues with phospholipid head groups (By similarity). Subsequently, the MDiS region destabilizes the membrane with penetration of hydrophobic residues (By similarity). This insertion causes a disorganization of the membrane, allowing an uncontrolled influx of ions (i.e. calcium and sodium), and eventually triggering irreversible intracellular alterations and cell death (By similarity).</text>
</comment>
<comment type="subunit">
    <text evidence="5">Monomer.</text>
</comment>
<comment type="subcellular location">
    <subcellularLocation>
        <location evidence="2">Secreted</location>
    </subcellularLocation>
</comment>
<comment type="tissue specificity">
    <text evidence="5">Expressed by the venom gland.</text>
</comment>
<comment type="mass spectrometry"/>
<comment type="miscellaneous">
    <text evidence="2">This protein corresponds to 0.8% of the venom protein content.</text>
</comment>
<comment type="similarity">
    <text evidence="4">Belongs to the phospholipase A2 family. Group II subfamily. K49 sub-subfamily.</text>
</comment>
<comment type="caution">
    <text evidence="4">Does not bind calcium as one of the calcium-binding sites is lost (Asp-&gt;Lys in position 48, which corresponds to 'Lys-49' in the current nomenclature).</text>
</comment>
<feature type="chain" id="PRO_0000452898" description="Basic phospholipase A2 homolog LmutTX" evidence="2">
    <location>
        <begin position="1"/>
        <end position="120"/>
    </location>
</feature>
<feature type="disulfide bond" evidence="1">
    <location>
        <begin position="26"/>
        <end position="114"/>
    </location>
</feature>
<feature type="disulfide bond" evidence="1">
    <location>
        <begin position="28"/>
        <end position="44"/>
    </location>
</feature>
<feature type="disulfide bond" evidence="1">
    <location>
        <begin position="43"/>
        <end position="95"/>
    </location>
</feature>
<feature type="disulfide bond" evidence="1">
    <location>
        <begin position="49"/>
        <end position="120"/>
    </location>
</feature>
<feature type="disulfide bond" evidence="1">
    <location>
        <begin position="50"/>
        <end position="88"/>
    </location>
</feature>
<feature type="disulfide bond" evidence="1">
    <location>
        <begin position="57"/>
        <end position="81"/>
    </location>
</feature>
<feature type="disulfide bond" evidence="1">
    <location>
        <begin position="75"/>
        <end position="86"/>
    </location>
</feature>
<dbReference type="SMR" id="P0DUN7"/>
<dbReference type="GO" id="GO:0005576">
    <property type="term" value="C:extracellular region"/>
    <property type="evidence" value="ECO:0007669"/>
    <property type="project" value="UniProtKB-SubCell"/>
</dbReference>
<dbReference type="GO" id="GO:0005509">
    <property type="term" value="F:calcium ion binding"/>
    <property type="evidence" value="ECO:0007669"/>
    <property type="project" value="InterPro"/>
</dbReference>
<dbReference type="GO" id="GO:0047498">
    <property type="term" value="F:calcium-dependent phospholipase A2 activity"/>
    <property type="evidence" value="ECO:0007669"/>
    <property type="project" value="TreeGrafter"/>
</dbReference>
<dbReference type="GO" id="GO:0005543">
    <property type="term" value="F:phospholipid binding"/>
    <property type="evidence" value="ECO:0007669"/>
    <property type="project" value="TreeGrafter"/>
</dbReference>
<dbReference type="GO" id="GO:0090729">
    <property type="term" value="F:toxin activity"/>
    <property type="evidence" value="ECO:0007669"/>
    <property type="project" value="UniProtKB-KW"/>
</dbReference>
<dbReference type="GO" id="GO:0050482">
    <property type="term" value="P:arachidonate secretion"/>
    <property type="evidence" value="ECO:0007669"/>
    <property type="project" value="InterPro"/>
</dbReference>
<dbReference type="GO" id="GO:0042742">
    <property type="term" value="P:defense response to bacterium"/>
    <property type="evidence" value="ECO:0007669"/>
    <property type="project" value="UniProtKB-KW"/>
</dbReference>
<dbReference type="GO" id="GO:0016042">
    <property type="term" value="P:lipid catabolic process"/>
    <property type="evidence" value="ECO:0007669"/>
    <property type="project" value="InterPro"/>
</dbReference>
<dbReference type="GO" id="GO:0042130">
    <property type="term" value="P:negative regulation of T cell proliferation"/>
    <property type="evidence" value="ECO:0007669"/>
    <property type="project" value="TreeGrafter"/>
</dbReference>
<dbReference type="GO" id="GO:0006644">
    <property type="term" value="P:phospholipid metabolic process"/>
    <property type="evidence" value="ECO:0007669"/>
    <property type="project" value="InterPro"/>
</dbReference>
<dbReference type="CDD" id="cd00125">
    <property type="entry name" value="PLA2c"/>
    <property type="match status" value="1"/>
</dbReference>
<dbReference type="FunFam" id="1.20.90.10:FF:000001">
    <property type="entry name" value="Basic phospholipase A2 homolog"/>
    <property type="match status" value="1"/>
</dbReference>
<dbReference type="Gene3D" id="1.20.90.10">
    <property type="entry name" value="Phospholipase A2 domain"/>
    <property type="match status" value="1"/>
</dbReference>
<dbReference type="InterPro" id="IPR001211">
    <property type="entry name" value="PLipase_A2"/>
</dbReference>
<dbReference type="InterPro" id="IPR033112">
    <property type="entry name" value="PLipase_A2_Asp_AS"/>
</dbReference>
<dbReference type="InterPro" id="IPR016090">
    <property type="entry name" value="PLipase_A2_dom"/>
</dbReference>
<dbReference type="InterPro" id="IPR036444">
    <property type="entry name" value="PLipase_A2_dom_sf"/>
</dbReference>
<dbReference type="InterPro" id="IPR033113">
    <property type="entry name" value="PLipase_A2_His_AS"/>
</dbReference>
<dbReference type="PANTHER" id="PTHR11716">
    <property type="entry name" value="PHOSPHOLIPASE A2 FAMILY MEMBER"/>
    <property type="match status" value="1"/>
</dbReference>
<dbReference type="PANTHER" id="PTHR11716:SF9">
    <property type="entry name" value="PHOSPHOLIPASE A2, MEMBRANE ASSOCIATED"/>
    <property type="match status" value="1"/>
</dbReference>
<dbReference type="Pfam" id="PF00068">
    <property type="entry name" value="Phospholip_A2_1"/>
    <property type="match status" value="1"/>
</dbReference>
<dbReference type="PRINTS" id="PR00389">
    <property type="entry name" value="PHPHLIPASEA2"/>
</dbReference>
<dbReference type="SMART" id="SM00085">
    <property type="entry name" value="PA2c"/>
    <property type="match status" value="1"/>
</dbReference>
<dbReference type="SUPFAM" id="SSF48619">
    <property type="entry name" value="Phospholipase A2, PLA2"/>
    <property type="match status" value="1"/>
</dbReference>
<dbReference type="PROSITE" id="PS00119">
    <property type="entry name" value="PA2_ASP"/>
    <property type="match status" value="1"/>
</dbReference>
<dbReference type="PROSITE" id="PS00118">
    <property type="entry name" value="PA2_HIS"/>
    <property type="match status" value="1"/>
</dbReference>
<accession>P0DUN7</accession>
<name>PA2H_LACMU</name>
<keyword id="KW-0044">Antibiotic</keyword>
<keyword id="KW-0929">Antimicrobial</keyword>
<keyword id="KW-0903">Direct protein sequencing</keyword>
<keyword id="KW-1015">Disulfide bond</keyword>
<keyword id="KW-0959">Myotoxin</keyword>
<keyword id="KW-0964">Secreted</keyword>
<keyword id="KW-0800">Toxin</keyword>
<proteinExistence type="evidence at protein level"/>
<reference key="1">
    <citation type="journal article" date="2018" name="Basic Clin. Pharmacol. Toxicol.">
        <title>Identification of the molecular determinants of the antibacterial activity of LmutTX, a Lys49 phospholipase A2 homologue isolated from Lachesis muta muta snake venom (Linnaeus, 1766).</title>
        <authorList>
            <person name="Diniz-Sousa R."/>
            <person name="Caldeira C.A.S."/>
            <person name="Kayano A.M."/>
            <person name="Paloschi M.V."/>
            <person name="Pimenta D.C."/>
            <person name="Simoes-Silva R."/>
            <person name="Ferreira A.S."/>
            <person name="Zanchi F.B."/>
            <person name="Matos N.B."/>
            <person name="Grabner F.P."/>
            <person name="Calderon L.A."/>
            <person name="Zuliani J.P."/>
            <person name="Soares A.M."/>
        </authorList>
    </citation>
    <scope>PROTEIN SEQUENCE</scope>
    <scope>FUNCTION</scope>
    <scope>SUBCELLULAR LOCATION</scope>
    <scope>MASS SPECTROMETRY</scope>
    <scope>SYNTHESIS</scope>
    <scope>3D-STRUCTURE MODELING</scope>
    <source>
        <tissue>Venom</tissue>
    </source>
</reference>
<protein>
    <recommendedName>
        <fullName evidence="3">Basic phospholipase A2 homolog LmutTX</fullName>
        <shortName>svPLA2 homolog</shortName>
    </recommendedName>
    <alternativeName>
        <fullName evidence="3">LmmV toxin</fullName>
    </alternativeName>
    <alternativeName>
        <fullName>Lys49 PLA2-like</fullName>
    </alternativeName>
</protein>
<evidence type="ECO:0000250" key="1">
    <source>
        <dbReference type="UniProtKB" id="I6L8L6"/>
    </source>
</evidence>
<evidence type="ECO:0000269" key="2">
    <source>
    </source>
</evidence>
<evidence type="ECO:0000303" key="3">
    <source>
    </source>
</evidence>
<evidence type="ECO:0000305" key="4"/>
<evidence type="ECO:0000305" key="5">
    <source>
    </source>
</evidence>
<organism>
    <name type="scientific">Lachesis muta muta</name>
    <name type="common">Bushmaster</name>
    <dbReference type="NCBI Taxonomy" id="8753"/>
    <lineage>
        <taxon>Eukaryota</taxon>
        <taxon>Metazoa</taxon>
        <taxon>Chordata</taxon>
        <taxon>Craniata</taxon>
        <taxon>Vertebrata</taxon>
        <taxon>Euteleostomi</taxon>
        <taxon>Lepidosauria</taxon>
        <taxon>Squamata</taxon>
        <taxon>Bifurcata</taxon>
        <taxon>Unidentata</taxon>
        <taxon>Episquamata</taxon>
        <taxon>Toxicofera</taxon>
        <taxon>Serpentes</taxon>
        <taxon>Colubroidea</taxon>
        <taxon>Viperidae</taxon>
        <taxon>Crotalinae</taxon>
        <taxon>Lachesis</taxon>
    </lineage>
</organism>